<reference key="1">
    <citation type="journal article" date="2013" name="Appl. Environ. Microbiol.">
        <title>The genome of the alga-associated marine flavobacterium Formosa agariphila KMM 3901T reveals a broad potential for degradation of algal polysaccharides.</title>
        <authorList>
            <person name="Mann A.J."/>
            <person name="Hahnke R.L."/>
            <person name="Huang S."/>
            <person name="Werner J."/>
            <person name="Xing P."/>
            <person name="Barbeyron T."/>
            <person name="Huettel B."/>
            <person name="Stueber K."/>
            <person name="Reinhardt R."/>
            <person name="Harder J."/>
            <person name="Gloeckner F.O."/>
            <person name="Amann R.I."/>
            <person name="Teeling H."/>
        </authorList>
    </citation>
    <scope>NUCLEOTIDE SEQUENCE [LARGE SCALE GENOMIC DNA]</scope>
    <source>
        <strain>DSM 15362 / KCTC 12365 / LMG 23005 / KMM 3901 / M-2Alg 35-1</strain>
    </source>
</reference>
<reference key="2">
    <citation type="journal article" date="2019" name="Nat. Chem. Biol.">
        <title>A marine bacterial enzymatic cascade degrades the algal polysaccharide ulvan.</title>
        <authorList>
            <person name="Reisky L."/>
            <person name="Prechoux A."/>
            <person name="Zuehlke M.K."/>
            <person name="Baeumgen M."/>
            <person name="Robb C.S."/>
            <person name="Gerlach N."/>
            <person name="Roret T."/>
            <person name="Stanetty C."/>
            <person name="Larocque R."/>
            <person name="Michel G."/>
            <person name="Song T."/>
            <person name="Markert S."/>
            <person name="Unfried F."/>
            <person name="Mihovilovic M.D."/>
            <person name="Trautwein-Schult A."/>
            <person name="Becher D."/>
            <person name="Schweder T."/>
            <person name="Bornscheuer U.T."/>
            <person name="Hehemann J.H."/>
        </authorList>
    </citation>
    <scope>FUNCTION</scope>
    <scope>SUBCELLULAR LOCATION</scope>
    <scope>INDUCTION</scope>
</reference>
<sequence length="264" mass="27957">MSVDLFDVKGKIALVTGSTHGLGMAMAKGLGLAGATIVVNGNSSQDKIDSAIAEYEKEGIKAVGYKFNVAKEDEVQAAVSKIEAEVGPIDILINNAGIIKRTPLLEMEVADFKEVVDIDLVSPFIVSKHVVKNMVERKAGKVINICSMMSELGRNSVGAYAAAKGGLKMLTQNMATEWAKYNIQVNGIGPGYFATSQTAPIRVDGHPFNDFIINRTPAAKWGDPNDLAGAAIFLSSKASDFVNGHVVYVDGGILATIGKPSNEE</sequence>
<comment type="function">
    <text evidence="1 6">2-dehydro-3-deoxy-D-gluconate 5-dehydrogenase involved in ulvan degradation (Probable). Ulvan is the main polysaccharide component of the Ulvales (green seaweed) cell wall. It is composed of disaccharide building blocks comprising 3-sulfated rhamnose (Rha3S) linked to D-glucuronic acid (GlcA), L-iduronic acid (IduA), or D-xylose (Xyl) (Probable). Catalyzes the reversible reduction of 2,5-diketo-3-deoxygluconate (DKII or 4,6-dihydroxy-2,5-dioxohexanoate) into 2-keto-3-deoxygluconate (KDG or 2-dehydro-3-deoxygluconate) with a concomitant oxidation of NADH (By similarity).</text>
</comment>
<comment type="catalytic activity">
    <reaction evidence="1">
        <text>2-dehydro-3-deoxy-D-gluconate + NAD(+) = 3-deoxy-D-glycero-2,5-hexodiulosonate + NADH + H(+)</text>
        <dbReference type="Rhea" id="RHEA:24232"/>
        <dbReference type="ChEBI" id="CHEBI:15378"/>
        <dbReference type="ChEBI" id="CHEBI:29071"/>
        <dbReference type="ChEBI" id="CHEBI:57540"/>
        <dbReference type="ChEBI" id="CHEBI:57945"/>
        <dbReference type="ChEBI" id="CHEBI:57990"/>
        <dbReference type="EC" id="1.1.1.127"/>
    </reaction>
</comment>
<comment type="subunit">
    <text evidence="1">Homotetramer.</text>
</comment>
<comment type="subcellular location">
    <subcellularLocation>
        <location evidence="3">Cytoplasm</location>
    </subcellularLocation>
</comment>
<comment type="induction">
    <text evidence="3">By ulvan and rhamnose.</text>
</comment>
<comment type="similarity">
    <text evidence="5">Belongs to the short-chain dehydrogenases/reductases (SDR) family.</text>
</comment>
<keyword id="KW-0119">Carbohydrate metabolism</keyword>
<keyword id="KW-0963">Cytoplasm</keyword>
<keyword id="KW-0520">NAD</keyword>
<keyword id="KW-0521">NADP</keyword>
<keyword id="KW-0560">Oxidoreductase</keyword>
<keyword id="KW-1185">Reference proteome</keyword>
<proteinExistence type="evidence at transcript level"/>
<accession>T2KLZ8</accession>
<protein>
    <recommendedName>
        <fullName evidence="5">2-dehydro-3-deoxy-D-gluconate 5-dehydrogenase</fullName>
        <ecNumber evidence="1">1.1.1.127</ecNumber>
    </recommendedName>
    <alternativeName>
        <fullName evidence="4">2-deoxy-D-gluconate 3-dehydrogenase</fullName>
    </alternativeName>
    <alternativeName>
        <fullName>2-keto-3-deoxygluconate 5-dehydrogenase</fullName>
    </alternativeName>
    <alternativeName>
        <fullName>2-keto-3-deoxygluconate oxidoreductase</fullName>
        <shortName>KDG oxidoreductase</shortName>
    </alternativeName>
    <alternativeName>
        <fullName evidence="4">P6_dehydrogenase</fullName>
    </alternativeName>
    <alternativeName>
        <fullName evidence="4">Polysaccharide utilization locus H protein P6</fullName>
        <shortName>PUL H protein P6</shortName>
    </alternativeName>
</protein>
<dbReference type="EC" id="1.1.1.127" evidence="1"/>
<dbReference type="EMBL" id="HG315671">
    <property type="protein sequence ID" value="CDF79907.1"/>
    <property type="molecule type" value="Genomic_DNA"/>
</dbReference>
<dbReference type="RefSeq" id="WP_038530495.1">
    <property type="nucleotide sequence ID" value="NZ_HG315671.1"/>
</dbReference>
<dbReference type="SMR" id="T2KLZ8"/>
<dbReference type="STRING" id="1347342.BN863_21950"/>
<dbReference type="PATRIC" id="fig|1347342.6.peg.2202"/>
<dbReference type="eggNOG" id="COG1028">
    <property type="taxonomic scope" value="Bacteria"/>
</dbReference>
<dbReference type="HOGENOM" id="CLU_010194_1_1_10"/>
<dbReference type="OrthoDB" id="9804104at2"/>
<dbReference type="Proteomes" id="UP000016160">
    <property type="component" value="Chromosome"/>
</dbReference>
<dbReference type="GO" id="GO:0005737">
    <property type="term" value="C:cytoplasm"/>
    <property type="evidence" value="ECO:0007669"/>
    <property type="project" value="UniProtKB-SubCell"/>
</dbReference>
<dbReference type="GO" id="GO:0047001">
    <property type="term" value="F:2-dehydro-3-deoxy-D-gluconate 5-dehydrogenase activity"/>
    <property type="evidence" value="ECO:0007669"/>
    <property type="project" value="UniProtKB-EC"/>
</dbReference>
<dbReference type="CDD" id="cd05347">
    <property type="entry name" value="Ga5DH-like_SDR_c"/>
    <property type="match status" value="1"/>
</dbReference>
<dbReference type="FunFam" id="3.40.50.720:FF:000173">
    <property type="entry name" value="3-oxoacyl-[acyl-carrier protein] reductase"/>
    <property type="match status" value="1"/>
</dbReference>
<dbReference type="Gene3D" id="3.40.50.720">
    <property type="entry name" value="NAD(P)-binding Rossmann-like Domain"/>
    <property type="match status" value="1"/>
</dbReference>
<dbReference type="InterPro" id="IPR036291">
    <property type="entry name" value="NAD(P)-bd_dom_sf"/>
</dbReference>
<dbReference type="InterPro" id="IPR020904">
    <property type="entry name" value="Sc_DH/Rdtase_CS"/>
</dbReference>
<dbReference type="InterPro" id="IPR002347">
    <property type="entry name" value="SDR_fam"/>
</dbReference>
<dbReference type="NCBIfam" id="NF005488">
    <property type="entry name" value="PRK07097.1"/>
    <property type="match status" value="1"/>
</dbReference>
<dbReference type="PANTHER" id="PTHR42760:SF115">
    <property type="entry name" value="3-OXOACYL-[ACYL-CARRIER-PROTEIN] REDUCTASE FABG"/>
    <property type="match status" value="1"/>
</dbReference>
<dbReference type="PANTHER" id="PTHR42760">
    <property type="entry name" value="SHORT-CHAIN DEHYDROGENASES/REDUCTASES FAMILY MEMBER"/>
    <property type="match status" value="1"/>
</dbReference>
<dbReference type="Pfam" id="PF00106">
    <property type="entry name" value="adh_short"/>
    <property type="match status" value="1"/>
</dbReference>
<dbReference type="PRINTS" id="PR00081">
    <property type="entry name" value="GDHRDH"/>
</dbReference>
<dbReference type="PRINTS" id="PR00080">
    <property type="entry name" value="SDRFAMILY"/>
</dbReference>
<dbReference type="SUPFAM" id="SSF51735">
    <property type="entry name" value="NAD(P)-binding Rossmann-fold domains"/>
    <property type="match status" value="1"/>
</dbReference>
<dbReference type="PROSITE" id="PS00061">
    <property type="entry name" value="ADH_SHORT"/>
    <property type="match status" value="1"/>
</dbReference>
<organism>
    <name type="scientific">Formosa agariphila (strain DSM 15362 / KCTC 12365 / LMG 23005 / KMM 3901 / M-2Alg 35-1)</name>
    <dbReference type="NCBI Taxonomy" id="1347342"/>
    <lineage>
        <taxon>Bacteria</taxon>
        <taxon>Pseudomonadati</taxon>
        <taxon>Bacteroidota</taxon>
        <taxon>Flavobacteriia</taxon>
        <taxon>Flavobacteriales</taxon>
        <taxon>Flavobacteriaceae</taxon>
        <taxon>Formosa</taxon>
    </lineage>
</organism>
<name>PLH6_FORAG</name>
<gene>
    <name type="primary">kduD</name>
    <name type="ORF">BN863_21950</name>
</gene>
<feature type="chain" id="PRO_0000448309" description="2-dehydro-3-deoxy-D-gluconate 5-dehydrogenase">
    <location>
        <begin position="1"/>
        <end position="264"/>
    </location>
</feature>
<feature type="active site" description="Proton acceptor" evidence="2">
    <location>
        <position position="160"/>
    </location>
</feature>
<feature type="binding site" evidence="1">
    <location>
        <begin position="14"/>
        <end position="38"/>
    </location>
    <ligand>
        <name>NAD(+)</name>
        <dbReference type="ChEBI" id="CHEBI:57540"/>
    </ligand>
</feature>
<feature type="binding site" evidence="1">
    <location>
        <position position="147"/>
    </location>
    <ligand>
        <name>substrate</name>
    </ligand>
</feature>
<evidence type="ECO:0000250" key="1">
    <source>
        <dbReference type="UniProtKB" id="P37769"/>
    </source>
</evidence>
<evidence type="ECO:0000255" key="2">
    <source>
        <dbReference type="PROSITE-ProRule" id="PRU10001"/>
    </source>
</evidence>
<evidence type="ECO:0000269" key="3">
    <source>
    </source>
</evidence>
<evidence type="ECO:0000303" key="4">
    <source>
    </source>
</evidence>
<evidence type="ECO:0000305" key="5"/>
<evidence type="ECO:0000305" key="6">
    <source>
    </source>
</evidence>